<keyword id="KW-0067">ATP-binding</keyword>
<keyword id="KW-0436">Ligase</keyword>
<keyword id="KW-0460">Magnesium</keyword>
<keyword id="KW-0479">Metal-binding</keyword>
<keyword id="KW-0547">Nucleotide-binding</keyword>
<keyword id="KW-0658">Purine biosynthesis</keyword>
<keyword id="KW-1185">Reference proteome</keyword>
<reference key="1">
    <citation type="submission" date="2009-05" db="EMBL/GenBank/DDBJ databases">
        <title>Complete sequence of Tolumonas auensis DSM 9187.</title>
        <authorList>
            <consortium name="US DOE Joint Genome Institute"/>
            <person name="Lucas S."/>
            <person name="Copeland A."/>
            <person name="Lapidus A."/>
            <person name="Glavina del Rio T."/>
            <person name="Tice H."/>
            <person name="Bruce D."/>
            <person name="Goodwin L."/>
            <person name="Pitluck S."/>
            <person name="Chertkov O."/>
            <person name="Brettin T."/>
            <person name="Detter J.C."/>
            <person name="Han C."/>
            <person name="Larimer F."/>
            <person name="Land M."/>
            <person name="Hauser L."/>
            <person name="Kyrpides N."/>
            <person name="Mikhailova N."/>
            <person name="Spring S."/>
            <person name="Beller H."/>
        </authorList>
    </citation>
    <scope>NUCLEOTIDE SEQUENCE [LARGE SCALE GENOMIC DNA]</scope>
    <source>
        <strain>DSM 9187 / NBRC 110442 / TA 4</strain>
    </source>
</reference>
<organism>
    <name type="scientific">Tolumonas auensis (strain DSM 9187 / NBRC 110442 / TA 4)</name>
    <dbReference type="NCBI Taxonomy" id="595494"/>
    <lineage>
        <taxon>Bacteria</taxon>
        <taxon>Pseudomonadati</taxon>
        <taxon>Pseudomonadota</taxon>
        <taxon>Gammaproteobacteria</taxon>
        <taxon>Aeromonadales</taxon>
        <taxon>Aeromonadaceae</taxon>
        <taxon>Tolumonas</taxon>
    </lineage>
</organism>
<name>PURT_TOLAT</name>
<evidence type="ECO:0000255" key="1">
    <source>
        <dbReference type="HAMAP-Rule" id="MF_01643"/>
    </source>
</evidence>
<dbReference type="EC" id="6.3.1.21" evidence="1"/>
<dbReference type="EMBL" id="CP001616">
    <property type="protein sequence ID" value="ACQ92716.1"/>
    <property type="molecule type" value="Genomic_DNA"/>
</dbReference>
<dbReference type="RefSeq" id="WP_012729315.1">
    <property type="nucleotide sequence ID" value="NC_012691.1"/>
</dbReference>
<dbReference type="SMR" id="C4LDC0"/>
<dbReference type="STRING" id="595494.Tola_1090"/>
<dbReference type="KEGG" id="tau:Tola_1090"/>
<dbReference type="eggNOG" id="COG0027">
    <property type="taxonomic scope" value="Bacteria"/>
</dbReference>
<dbReference type="HOGENOM" id="CLU_011534_1_3_6"/>
<dbReference type="OrthoDB" id="9804625at2"/>
<dbReference type="UniPathway" id="UPA00074">
    <property type="reaction ID" value="UER00127"/>
</dbReference>
<dbReference type="Proteomes" id="UP000009073">
    <property type="component" value="Chromosome"/>
</dbReference>
<dbReference type="GO" id="GO:0005829">
    <property type="term" value="C:cytosol"/>
    <property type="evidence" value="ECO:0007669"/>
    <property type="project" value="TreeGrafter"/>
</dbReference>
<dbReference type="GO" id="GO:0005524">
    <property type="term" value="F:ATP binding"/>
    <property type="evidence" value="ECO:0007669"/>
    <property type="project" value="UniProtKB-UniRule"/>
</dbReference>
<dbReference type="GO" id="GO:0000287">
    <property type="term" value="F:magnesium ion binding"/>
    <property type="evidence" value="ECO:0007669"/>
    <property type="project" value="InterPro"/>
</dbReference>
<dbReference type="GO" id="GO:0043815">
    <property type="term" value="F:phosphoribosylglycinamide formyltransferase 2 activity"/>
    <property type="evidence" value="ECO:0007669"/>
    <property type="project" value="UniProtKB-UniRule"/>
</dbReference>
<dbReference type="GO" id="GO:0004644">
    <property type="term" value="F:phosphoribosylglycinamide formyltransferase activity"/>
    <property type="evidence" value="ECO:0007669"/>
    <property type="project" value="InterPro"/>
</dbReference>
<dbReference type="GO" id="GO:0006189">
    <property type="term" value="P:'de novo' IMP biosynthetic process"/>
    <property type="evidence" value="ECO:0007669"/>
    <property type="project" value="UniProtKB-UniRule"/>
</dbReference>
<dbReference type="FunFam" id="3.30.1490.20:FF:000013">
    <property type="entry name" value="Formate-dependent phosphoribosylglycinamide formyltransferase"/>
    <property type="match status" value="1"/>
</dbReference>
<dbReference type="FunFam" id="3.30.470.20:FF:000027">
    <property type="entry name" value="Formate-dependent phosphoribosylglycinamide formyltransferase"/>
    <property type="match status" value="1"/>
</dbReference>
<dbReference type="FunFam" id="3.40.50.20:FF:000007">
    <property type="entry name" value="Formate-dependent phosphoribosylglycinamide formyltransferase"/>
    <property type="match status" value="1"/>
</dbReference>
<dbReference type="Gene3D" id="3.40.50.20">
    <property type="match status" value="1"/>
</dbReference>
<dbReference type="Gene3D" id="3.30.1490.20">
    <property type="entry name" value="ATP-grasp fold, A domain"/>
    <property type="match status" value="1"/>
</dbReference>
<dbReference type="Gene3D" id="3.30.470.20">
    <property type="entry name" value="ATP-grasp fold, B domain"/>
    <property type="match status" value="1"/>
</dbReference>
<dbReference type="HAMAP" id="MF_01643">
    <property type="entry name" value="PurT"/>
    <property type="match status" value="1"/>
</dbReference>
<dbReference type="InterPro" id="IPR011761">
    <property type="entry name" value="ATP-grasp"/>
</dbReference>
<dbReference type="InterPro" id="IPR003135">
    <property type="entry name" value="ATP-grasp_carboxylate-amine"/>
</dbReference>
<dbReference type="InterPro" id="IPR013815">
    <property type="entry name" value="ATP_grasp_subdomain_1"/>
</dbReference>
<dbReference type="InterPro" id="IPR016185">
    <property type="entry name" value="PreATP-grasp_dom_sf"/>
</dbReference>
<dbReference type="InterPro" id="IPR005862">
    <property type="entry name" value="PurT"/>
</dbReference>
<dbReference type="InterPro" id="IPR054350">
    <property type="entry name" value="PurT/PurK_preATP-grasp"/>
</dbReference>
<dbReference type="InterPro" id="IPR048740">
    <property type="entry name" value="PurT_C"/>
</dbReference>
<dbReference type="InterPro" id="IPR011054">
    <property type="entry name" value="Rudment_hybrid_motif"/>
</dbReference>
<dbReference type="NCBIfam" id="NF006766">
    <property type="entry name" value="PRK09288.1"/>
    <property type="match status" value="1"/>
</dbReference>
<dbReference type="NCBIfam" id="TIGR01142">
    <property type="entry name" value="purT"/>
    <property type="match status" value="1"/>
</dbReference>
<dbReference type="PANTHER" id="PTHR43055">
    <property type="entry name" value="FORMATE-DEPENDENT PHOSPHORIBOSYLGLYCINAMIDE FORMYLTRANSFERASE"/>
    <property type="match status" value="1"/>
</dbReference>
<dbReference type="PANTHER" id="PTHR43055:SF1">
    <property type="entry name" value="FORMATE-DEPENDENT PHOSPHORIBOSYLGLYCINAMIDE FORMYLTRANSFERASE"/>
    <property type="match status" value="1"/>
</dbReference>
<dbReference type="Pfam" id="PF02222">
    <property type="entry name" value="ATP-grasp"/>
    <property type="match status" value="1"/>
</dbReference>
<dbReference type="Pfam" id="PF21244">
    <property type="entry name" value="PurT_C"/>
    <property type="match status" value="1"/>
</dbReference>
<dbReference type="Pfam" id="PF22660">
    <property type="entry name" value="RS_preATP-grasp-like"/>
    <property type="match status" value="1"/>
</dbReference>
<dbReference type="SUPFAM" id="SSF56059">
    <property type="entry name" value="Glutathione synthetase ATP-binding domain-like"/>
    <property type="match status" value="1"/>
</dbReference>
<dbReference type="SUPFAM" id="SSF52440">
    <property type="entry name" value="PreATP-grasp domain"/>
    <property type="match status" value="1"/>
</dbReference>
<dbReference type="SUPFAM" id="SSF51246">
    <property type="entry name" value="Rudiment single hybrid motif"/>
    <property type="match status" value="1"/>
</dbReference>
<dbReference type="PROSITE" id="PS50975">
    <property type="entry name" value="ATP_GRASP"/>
    <property type="match status" value="1"/>
</dbReference>
<proteinExistence type="inferred from homology"/>
<comment type="function">
    <text evidence="1">Involved in the de novo purine biosynthesis. Catalyzes the transfer of formate to 5-phospho-ribosyl-glycinamide (GAR), producing 5-phospho-ribosyl-N-formylglycinamide (FGAR). Formate is provided by PurU via hydrolysis of 10-formyl-tetrahydrofolate.</text>
</comment>
<comment type="catalytic activity">
    <reaction evidence="1">
        <text>N(1)-(5-phospho-beta-D-ribosyl)glycinamide + formate + ATP = N(2)-formyl-N(1)-(5-phospho-beta-D-ribosyl)glycinamide + ADP + phosphate + H(+)</text>
        <dbReference type="Rhea" id="RHEA:24829"/>
        <dbReference type="ChEBI" id="CHEBI:15378"/>
        <dbReference type="ChEBI" id="CHEBI:15740"/>
        <dbReference type="ChEBI" id="CHEBI:30616"/>
        <dbReference type="ChEBI" id="CHEBI:43474"/>
        <dbReference type="ChEBI" id="CHEBI:143788"/>
        <dbReference type="ChEBI" id="CHEBI:147286"/>
        <dbReference type="ChEBI" id="CHEBI:456216"/>
        <dbReference type="EC" id="6.3.1.21"/>
    </reaction>
    <physiologicalReaction direction="left-to-right" evidence="1">
        <dbReference type="Rhea" id="RHEA:24830"/>
    </physiologicalReaction>
</comment>
<comment type="pathway">
    <text evidence="1">Purine metabolism; IMP biosynthesis via de novo pathway; N(2)-formyl-N(1)-(5-phospho-D-ribosyl)glycinamide from N(1)-(5-phospho-D-ribosyl)glycinamide (formate route): step 1/1.</text>
</comment>
<comment type="subunit">
    <text evidence="1">Homodimer.</text>
</comment>
<comment type="similarity">
    <text evidence="1">Belongs to the PurK/PurT family.</text>
</comment>
<protein>
    <recommendedName>
        <fullName evidence="1">Formate-dependent phosphoribosylglycinamide formyltransferase</fullName>
        <ecNumber evidence="1">6.3.1.21</ecNumber>
    </recommendedName>
    <alternativeName>
        <fullName evidence="1">5'-phosphoribosylglycinamide transformylase 2</fullName>
    </alternativeName>
    <alternativeName>
        <fullName evidence="1">Formate-dependent GAR transformylase</fullName>
    </alternativeName>
    <alternativeName>
        <fullName evidence="1">GAR transformylase 2</fullName>
        <shortName evidence="1">GART 2</shortName>
    </alternativeName>
    <alternativeName>
        <fullName evidence="1">Non-folate glycinamide ribonucleotide transformylase</fullName>
    </alternativeName>
    <alternativeName>
        <fullName evidence="1">Phosphoribosylglycinamide formyltransferase 2</fullName>
    </alternativeName>
</protein>
<gene>
    <name evidence="1" type="primary">purT</name>
    <name type="ordered locus">Tola_1090</name>
</gene>
<feature type="chain" id="PRO_1000215840" description="Formate-dependent phosphoribosylglycinamide formyltransferase">
    <location>
        <begin position="1"/>
        <end position="394"/>
    </location>
</feature>
<feature type="domain" description="ATP-grasp" evidence="1">
    <location>
        <begin position="119"/>
        <end position="308"/>
    </location>
</feature>
<feature type="binding site" evidence="1">
    <location>
        <begin position="22"/>
        <end position="23"/>
    </location>
    <ligand>
        <name>N(1)-(5-phospho-beta-D-ribosyl)glycinamide</name>
        <dbReference type="ChEBI" id="CHEBI:143788"/>
    </ligand>
</feature>
<feature type="binding site" evidence="1">
    <location>
        <position position="82"/>
    </location>
    <ligand>
        <name>N(1)-(5-phospho-beta-D-ribosyl)glycinamide</name>
        <dbReference type="ChEBI" id="CHEBI:143788"/>
    </ligand>
</feature>
<feature type="binding site" evidence="1">
    <location>
        <position position="114"/>
    </location>
    <ligand>
        <name>ATP</name>
        <dbReference type="ChEBI" id="CHEBI:30616"/>
    </ligand>
</feature>
<feature type="binding site" evidence="1">
    <location>
        <position position="155"/>
    </location>
    <ligand>
        <name>ATP</name>
        <dbReference type="ChEBI" id="CHEBI:30616"/>
    </ligand>
</feature>
<feature type="binding site" evidence="1">
    <location>
        <begin position="160"/>
        <end position="165"/>
    </location>
    <ligand>
        <name>ATP</name>
        <dbReference type="ChEBI" id="CHEBI:30616"/>
    </ligand>
</feature>
<feature type="binding site" evidence="1">
    <location>
        <begin position="195"/>
        <end position="198"/>
    </location>
    <ligand>
        <name>ATP</name>
        <dbReference type="ChEBI" id="CHEBI:30616"/>
    </ligand>
</feature>
<feature type="binding site" evidence="1">
    <location>
        <position position="203"/>
    </location>
    <ligand>
        <name>ATP</name>
        <dbReference type="ChEBI" id="CHEBI:30616"/>
    </ligand>
</feature>
<feature type="binding site" evidence="1">
    <location>
        <position position="267"/>
    </location>
    <ligand>
        <name>Mg(2+)</name>
        <dbReference type="ChEBI" id="CHEBI:18420"/>
    </ligand>
</feature>
<feature type="binding site" evidence="1">
    <location>
        <position position="279"/>
    </location>
    <ligand>
        <name>Mg(2+)</name>
        <dbReference type="ChEBI" id="CHEBI:18420"/>
    </ligand>
</feature>
<feature type="binding site" evidence="1">
    <location>
        <position position="286"/>
    </location>
    <ligand>
        <name>N(1)-(5-phospho-beta-D-ribosyl)glycinamide</name>
        <dbReference type="ChEBI" id="CHEBI:143788"/>
    </ligand>
</feature>
<feature type="binding site" evidence="1">
    <location>
        <position position="357"/>
    </location>
    <ligand>
        <name>N(1)-(5-phospho-beta-D-ribosyl)glycinamide</name>
        <dbReference type="ChEBI" id="CHEBI:143788"/>
    </ligand>
</feature>
<feature type="binding site" evidence="1">
    <location>
        <begin position="364"/>
        <end position="365"/>
    </location>
    <ligand>
        <name>N(1)-(5-phospho-beta-D-ribosyl)glycinamide</name>
        <dbReference type="ChEBI" id="CHEBI:143788"/>
    </ligand>
</feature>
<sequence length="394" mass="42869">MSFLGTPYSNGATRAMLLGSGELGKEVAIELQRLGVEVIAVDRYANAPAMQVAHRSHVISMLDGEALSQLVQQEKPHFIIPEIEAIATETLQKLEQEGFNVVPTALATRLTMDREGIRRLAAETLKLPTSPYFFAETEAEYQQAVEQIGFPCVIKPVMSSSGKGQSVVRKADQVAVAWQYAQEGGRAGRGRVIVEGFVPFDYEITLLTVSAVDGIHFCAPIGHRQEDGDYRESWQPQVMSDALLEKSQHVAREVVKALGGYGLFGVELFIKGDEVYFSEVSPRPHDTGMVTLISQDMSEFALHVRAILGLPIGKITQYGPAASAVVLREGNSTDIRYGNLPAALAQIPGAQLRLFGKPEIAGRRRLGVALVRAENVELAIEQAKQVAAAVDVKF</sequence>
<accession>C4LDC0</accession>